<comment type="function">
    <text evidence="1">This protein specifically catalyzes the removal of signal peptides from prolipoproteins.</text>
</comment>
<comment type="catalytic activity">
    <reaction evidence="1">
        <text>Release of signal peptides from bacterial membrane prolipoproteins. Hydrolyzes -Xaa-Yaa-Zaa-|-(S,diacylglyceryl)Cys-, in which Xaa is hydrophobic (preferably Leu), and Yaa (Ala or Ser) and Zaa (Gly or Ala) have small, neutral side chains.</text>
        <dbReference type="EC" id="3.4.23.36"/>
    </reaction>
</comment>
<comment type="pathway">
    <text evidence="1">Protein modification; lipoprotein biosynthesis (signal peptide cleavage).</text>
</comment>
<comment type="subcellular location">
    <subcellularLocation>
        <location evidence="1">Cell membrane</location>
        <topology evidence="1">Multi-pass membrane protein</topology>
    </subcellularLocation>
</comment>
<comment type="similarity">
    <text evidence="1">Belongs to the peptidase A8 family.</text>
</comment>
<dbReference type="EC" id="3.4.23.36" evidence="1"/>
<dbReference type="EMBL" id="AM295007">
    <property type="protein sequence ID" value="CAM30495.1"/>
    <property type="molecule type" value="Genomic_DNA"/>
</dbReference>
<dbReference type="RefSeq" id="WP_011017647.1">
    <property type="nucleotide sequence ID" value="NC_009332.1"/>
</dbReference>
<dbReference type="SMR" id="A2RF66"/>
<dbReference type="KEGG" id="spf:SpyM51170"/>
<dbReference type="HOGENOM" id="CLU_083252_3_3_9"/>
<dbReference type="UniPathway" id="UPA00665"/>
<dbReference type="GO" id="GO:0005886">
    <property type="term" value="C:plasma membrane"/>
    <property type="evidence" value="ECO:0007669"/>
    <property type="project" value="UniProtKB-SubCell"/>
</dbReference>
<dbReference type="GO" id="GO:0004190">
    <property type="term" value="F:aspartic-type endopeptidase activity"/>
    <property type="evidence" value="ECO:0007669"/>
    <property type="project" value="UniProtKB-UniRule"/>
</dbReference>
<dbReference type="GO" id="GO:0006508">
    <property type="term" value="P:proteolysis"/>
    <property type="evidence" value="ECO:0007669"/>
    <property type="project" value="UniProtKB-KW"/>
</dbReference>
<dbReference type="HAMAP" id="MF_00161">
    <property type="entry name" value="LspA"/>
    <property type="match status" value="1"/>
</dbReference>
<dbReference type="InterPro" id="IPR001872">
    <property type="entry name" value="Peptidase_A8"/>
</dbReference>
<dbReference type="NCBIfam" id="TIGR00077">
    <property type="entry name" value="lspA"/>
    <property type="match status" value="1"/>
</dbReference>
<dbReference type="PANTHER" id="PTHR33695">
    <property type="entry name" value="LIPOPROTEIN SIGNAL PEPTIDASE"/>
    <property type="match status" value="1"/>
</dbReference>
<dbReference type="PANTHER" id="PTHR33695:SF1">
    <property type="entry name" value="LIPOPROTEIN SIGNAL PEPTIDASE"/>
    <property type="match status" value="1"/>
</dbReference>
<dbReference type="Pfam" id="PF01252">
    <property type="entry name" value="Peptidase_A8"/>
    <property type="match status" value="1"/>
</dbReference>
<dbReference type="PRINTS" id="PR00781">
    <property type="entry name" value="LIPOSIGPTASE"/>
</dbReference>
<dbReference type="PROSITE" id="PS00855">
    <property type="entry name" value="SPASE_II"/>
    <property type="match status" value="1"/>
</dbReference>
<gene>
    <name evidence="1" type="primary">lspA</name>
    <name type="ordered locus">SpyM51170</name>
</gene>
<keyword id="KW-0064">Aspartyl protease</keyword>
<keyword id="KW-1003">Cell membrane</keyword>
<keyword id="KW-0378">Hydrolase</keyword>
<keyword id="KW-0472">Membrane</keyword>
<keyword id="KW-0645">Protease</keyword>
<keyword id="KW-0812">Transmembrane</keyword>
<keyword id="KW-1133">Transmembrane helix</keyword>
<reference key="1">
    <citation type="journal article" date="2007" name="J. Bacteriol.">
        <title>Complete genome of acute rheumatic fever-associated serotype M5 Streptococcus pyogenes strain Manfredo.</title>
        <authorList>
            <person name="Holden M.T.G."/>
            <person name="Scott A."/>
            <person name="Cherevach I."/>
            <person name="Chillingworth T."/>
            <person name="Churcher C."/>
            <person name="Cronin A."/>
            <person name="Dowd L."/>
            <person name="Feltwell T."/>
            <person name="Hamlin N."/>
            <person name="Holroyd S."/>
            <person name="Jagels K."/>
            <person name="Moule S."/>
            <person name="Mungall K."/>
            <person name="Quail M.A."/>
            <person name="Price C."/>
            <person name="Rabbinowitsch E."/>
            <person name="Sharp S."/>
            <person name="Skelton J."/>
            <person name="Whitehead S."/>
            <person name="Barrell B.G."/>
            <person name="Kehoe M."/>
            <person name="Parkhill J."/>
        </authorList>
    </citation>
    <scope>NUCLEOTIDE SEQUENCE [LARGE SCALE GENOMIC DNA]</scope>
    <source>
        <strain>Manfredo</strain>
    </source>
</reference>
<evidence type="ECO:0000255" key="1">
    <source>
        <dbReference type="HAMAP-Rule" id="MF_00161"/>
    </source>
</evidence>
<sequence length="152" mass="17286">MKKRLFVLSLILLVALDQLSKFWIVSHIALGEVKPFIPGIVSLTYLQNNGAAFSILQDQQWFFVVITVLVIGYAIYYLATHPHLNIWKQLALLLIISGGIGNFIDRLRLAYVIDMIHLDFVDFAIFNVADSYLTVGVILLVICLWKEEDYGN</sequence>
<accession>A2RF66</accession>
<name>LSPA_STRPG</name>
<proteinExistence type="inferred from homology"/>
<organism>
    <name type="scientific">Streptococcus pyogenes serotype M5 (strain Manfredo)</name>
    <dbReference type="NCBI Taxonomy" id="160491"/>
    <lineage>
        <taxon>Bacteria</taxon>
        <taxon>Bacillati</taxon>
        <taxon>Bacillota</taxon>
        <taxon>Bacilli</taxon>
        <taxon>Lactobacillales</taxon>
        <taxon>Streptococcaceae</taxon>
        <taxon>Streptococcus</taxon>
    </lineage>
</organism>
<protein>
    <recommendedName>
        <fullName evidence="1">Lipoprotein signal peptidase</fullName>
        <ecNumber evidence="1">3.4.23.36</ecNumber>
    </recommendedName>
    <alternativeName>
        <fullName evidence="1">Prolipoprotein signal peptidase</fullName>
    </alternativeName>
    <alternativeName>
        <fullName evidence="1">Signal peptidase II</fullName>
        <shortName evidence="1">SPase II</shortName>
    </alternativeName>
</protein>
<feature type="chain" id="PRO_0000289445" description="Lipoprotein signal peptidase">
    <location>
        <begin position="1"/>
        <end position="152"/>
    </location>
</feature>
<feature type="transmembrane region" description="Helical" evidence="1">
    <location>
        <begin position="5"/>
        <end position="25"/>
    </location>
</feature>
<feature type="transmembrane region" description="Helical" evidence="1">
    <location>
        <begin position="61"/>
        <end position="81"/>
    </location>
</feature>
<feature type="transmembrane region" description="Helical" evidence="1">
    <location>
        <begin position="84"/>
        <end position="104"/>
    </location>
</feature>
<feature type="transmembrane region" description="Helical" evidence="1">
    <location>
        <begin position="125"/>
        <end position="145"/>
    </location>
</feature>
<feature type="active site" evidence="1">
    <location>
        <position position="114"/>
    </location>
</feature>
<feature type="active site" evidence="1">
    <location>
        <position position="130"/>
    </location>
</feature>